<organismHost>
    <name type="scientific">Aves</name>
    <dbReference type="NCBI Taxonomy" id="8782"/>
</organismHost>
<organismHost>
    <name type="scientific">Equus caballus</name>
    <name type="common">Horse</name>
    <dbReference type="NCBI Taxonomy" id="9796"/>
</organismHost>
<evidence type="ECO:0000255" key="1">
    <source>
        <dbReference type="HAMAP-Rule" id="MF_04069"/>
    </source>
</evidence>
<evidence type="ECO:0000256" key="2">
    <source>
        <dbReference type="SAM" id="MobiDB-lite"/>
    </source>
</evidence>
<proteinExistence type="inferred from homology"/>
<sequence length="97" mass="11072">MSLLTEVETPTRNGWECKCSGSSDPLVIAASIIGILHLILWILDRLFFKFIYRRLKYGLKGGPSTEGVPESMREEYRQEQQNAVDVDDGHFVNIELE</sequence>
<gene>
    <name evidence="1" type="primary">M</name>
</gene>
<protein>
    <recommendedName>
        <fullName evidence="1">Matrix protein 2</fullName>
    </recommendedName>
    <alternativeName>
        <fullName evidence="1">Proton channel protein M2</fullName>
    </alternativeName>
</protein>
<dbReference type="EMBL" id="M63529">
    <property type="protein sequence ID" value="AAA43291.1"/>
    <property type="molecule type" value="Genomic_RNA"/>
</dbReference>
<dbReference type="SMR" id="Q67172"/>
<dbReference type="GO" id="GO:0020002">
    <property type="term" value="C:host cell plasma membrane"/>
    <property type="evidence" value="ECO:0007669"/>
    <property type="project" value="UniProtKB-SubCell"/>
</dbReference>
<dbReference type="GO" id="GO:0016020">
    <property type="term" value="C:membrane"/>
    <property type="evidence" value="ECO:0007669"/>
    <property type="project" value="UniProtKB-UniRule"/>
</dbReference>
<dbReference type="GO" id="GO:0055036">
    <property type="term" value="C:virion membrane"/>
    <property type="evidence" value="ECO:0007669"/>
    <property type="project" value="UniProtKB-SubCell"/>
</dbReference>
<dbReference type="GO" id="GO:0005216">
    <property type="term" value="F:monoatomic ion channel activity"/>
    <property type="evidence" value="ECO:0007669"/>
    <property type="project" value="UniProtKB-UniRule"/>
</dbReference>
<dbReference type="GO" id="GO:0015078">
    <property type="term" value="F:proton transmembrane transporter activity"/>
    <property type="evidence" value="ECO:0007669"/>
    <property type="project" value="UniProtKB-UniRule"/>
</dbReference>
<dbReference type="GO" id="GO:0051259">
    <property type="term" value="P:protein complex oligomerization"/>
    <property type="evidence" value="ECO:0007669"/>
    <property type="project" value="UniProtKB-UniRule"/>
</dbReference>
<dbReference type="GO" id="GO:0044694">
    <property type="term" value="P:symbiont genome entry into host cell via pore formation in plasma membrane"/>
    <property type="evidence" value="ECO:0007669"/>
    <property type="project" value="UniProtKB-UniRule"/>
</dbReference>
<dbReference type="GO" id="GO:0140321">
    <property type="term" value="P:symbiont-mediated suppression of host autophagy"/>
    <property type="evidence" value="ECO:0007669"/>
    <property type="project" value="UniProtKB-KW"/>
</dbReference>
<dbReference type="Gene3D" id="6.10.250.1640">
    <property type="match status" value="1"/>
</dbReference>
<dbReference type="HAMAP" id="MF_04069">
    <property type="entry name" value="INFV_M2"/>
    <property type="match status" value="1"/>
</dbReference>
<dbReference type="InterPro" id="IPR002089">
    <property type="entry name" value="Flu_M2"/>
</dbReference>
<dbReference type="Pfam" id="PF00599">
    <property type="entry name" value="Flu_M2"/>
    <property type="match status" value="1"/>
</dbReference>
<accession>Q67172</accession>
<name>M2_I86A3</name>
<comment type="function">
    <text evidence="1">Forms a proton-selective ion channel that is necessary for the efficient release of the viral genome during virus entry. After attaching to the cell surface, the virion enters the cell by endocytosis. Acidification of the endosome triggers M2 ion channel activity. The influx of protons into virion interior is believed to disrupt interactions between the viral ribonucleoprotein (RNP), matrix protein 1 (M1), and lipid bilayers, thereby freeing the viral genome from interaction with viral proteins and enabling RNA segments to migrate to the host cell nucleus, where influenza virus RNA transcription and replication occur. Also plays a role in viral proteins secretory pathway. Elevates the intravesicular pH of normally acidic compartments, such as trans-Golgi network, preventing newly formed hemagglutinin from premature switching to the fusion-active conformation.</text>
</comment>
<comment type="activity regulation">
    <text>The M2 protein from most influenza A strains is inhibited by amantadine and rimantadine, resulting in viral uncoating incapacity. Emergence of amantadine-resistant variants is usually rapid.</text>
</comment>
<comment type="subunit">
    <text evidence="1">Homotetramer; composed of two disulfide-linked dimers held together by non-covalent interactions. May interact with matrix protein 1.</text>
</comment>
<comment type="subcellular location">
    <subcellularLocation>
        <location evidence="1">Virion membrane</location>
    </subcellularLocation>
    <subcellularLocation>
        <location evidence="1">Host apical cell membrane</location>
        <topology evidence="1">Single-pass type III membrane protein</topology>
    </subcellularLocation>
    <text evidence="1">Abundantly expressed at the apical plasma membrane in infected polarized epithelial cells, in close proximity to budding and assembled virions. Minor component of virions (only 16-20 molecules/virion).</text>
</comment>
<comment type="alternative products">
    <event type="alternative splicing"/>
    <isoform>
        <id>Q67172-1</id>
        <name>M2</name>
        <sequence type="displayed"/>
    </isoform>
    <isoform>
        <id>Q67173-1</id>
        <name>M1</name>
        <sequence type="external"/>
    </isoform>
    <text>Only the first 9 residues are shared by the 2 isoforms.</text>
</comment>
<comment type="domain">
    <text evidence="1">Cytoplasmic tail plays an important role in virion assembly and morphogenesis.</text>
</comment>
<comment type="miscellaneous">
    <text evidence="1">When the channel is activated, one or more imidazole moieties of His-37 probably become bi-protonated.</text>
</comment>
<comment type="similarity">
    <text evidence="1">Belongs to the influenza viruses matrix protein M2 family.</text>
</comment>
<keyword id="KW-0025">Alternative splicing</keyword>
<keyword id="KW-1015">Disulfide bond</keyword>
<keyword id="KW-1032">Host cell membrane</keyword>
<keyword id="KW-1043">Host membrane</keyword>
<keyword id="KW-0945">Host-virus interaction</keyword>
<keyword id="KW-0375">Hydrogen ion transport</keyword>
<keyword id="KW-1083">Inhibition of host autophagy by virus</keyword>
<keyword id="KW-0407">Ion channel</keyword>
<keyword id="KW-0406">Ion transport</keyword>
<keyword id="KW-0449">Lipoprotein</keyword>
<keyword id="KW-0472">Membrane</keyword>
<keyword id="KW-0564">Palmitate</keyword>
<keyword id="KW-0597">Phosphoprotein</keyword>
<keyword id="KW-0735">Signal-anchor</keyword>
<keyword id="KW-0812">Transmembrane</keyword>
<keyword id="KW-1133">Transmembrane helix</keyword>
<keyword id="KW-0813">Transport</keyword>
<keyword id="KW-1182">Viral ion channel</keyword>
<keyword id="KW-0946">Virion</keyword>
<feature type="chain" id="PRO_0000326385" description="Matrix protein 2">
    <location>
        <begin position="1"/>
        <end position="97"/>
    </location>
</feature>
<feature type="topological domain" description="Virion surface" evidence="1">
    <location>
        <begin position="1"/>
        <end position="22"/>
    </location>
</feature>
<feature type="transmembrane region" description="Helical; Signal-anchor for type III membrane protein" evidence="1">
    <location>
        <begin position="23"/>
        <end position="43"/>
    </location>
</feature>
<feature type="topological domain" description="Intravirion" evidence="1">
    <location>
        <begin position="44"/>
        <end position="97"/>
    </location>
</feature>
<feature type="region of interest" description="Disordered" evidence="2">
    <location>
        <begin position="61"/>
        <end position="80"/>
    </location>
</feature>
<feature type="site" description="Essential for channel activity, possibly by being protonated during channel activation, and by forming the channel gate and the selective filter" evidence="1">
    <location>
        <position position="37"/>
    </location>
</feature>
<feature type="site" description="Seems to be involved in pH gating" evidence="1">
    <location>
        <position position="41"/>
    </location>
</feature>
<feature type="modified residue" description="Phosphoserine; by host" evidence="1">
    <location>
        <position position="64"/>
    </location>
</feature>
<feature type="disulfide bond" description="Interchain (with C-17)" evidence="1">
    <location>
        <position position="17"/>
    </location>
</feature>
<feature type="disulfide bond" description="Interchain (with C-19)" evidence="1">
    <location>
        <position position="19"/>
    </location>
</feature>
<reference key="1">
    <citation type="journal article" date="1991" name="J. Virol.">
        <title>Evolutionary analysis of the influenza A virus M gene with comparison of the M1 and M2 proteins.</title>
        <authorList>
            <person name="Ito T."/>
            <person name="Gorman O.T."/>
            <person name="Kawaoka Y."/>
            <person name="Bean W.J."/>
            <person name="Webster R.G."/>
        </authorList>
    </citation>
    <scope>NUCLEOTIDE SEQUENCE [GENOMIC RNA]</scope>
</reference>
<organism>
    <name type="scientific">Influenza A virus (strain A/Equine/Tennessee/5/1986 H3N8)</name>
    <dbReference type="NCBI Taxonomy" id="380339"/>
    <lineage>
        <taxon>Viruses</taxon>
        <taxon>Riboviria</taxon>
        <taxon>Orthornavirae</taxon>
        <taxon>Negarnaviricota</taxon>
        <taxon>Polyploviricotina</taxon>
        <taxon>Insthoviricetes</taxon>
        <taxon>Articulavirales</taxon>
        <taxon>Orthomyxoviridae</taxon>
        <taxon>Alphainfluenzavirus</taxon>
        <taxon>Alphainfluenzavirus influenzae</taxon>
        <taxon>Influenza A virus</taxon>
    </lineage>
</organism>